<accession>Q0SX84</accession>
<proteinExistence type="inferred from homology"/>
<organism>
    <name type="scientific">Shigella flexneri serotype 5b (strain 8401)</name>
    <dbReference type="NCBI Taxonomy" id="373384"/>
    <lineage>
        <taxon>Bacteria</taxon>
        <taxon>Pseudomonadati</taxon>
        <taxon>Pseudomonadota</taxon>
        <taxon>Gammaproteobacteria</taxon>
        <taxon>Enterobacterales</taxon>
        <taxon>Enterobacteriaceae</taxon>
        <taxon>Shigella</taxon>
    </lineage>
</organism>
<gene>
    <name evidence="1" type="primary">rpsR</name>
    <name type="ordered locus">SFV_4357</name>
</gene>
<keyword id="KW-0687">Ribonucleoprotein</keyword>
<keyword id="KW-0689">Ribosomal protein</keyword>
<keyword id="KW-0694">RNA-binding</keyword>
<keyword id="KW-0699">rRNA-binding</keyword>
<name>RS18_SHIF8</name>
<dbReference type="EMBL" id="CP000266">
    <property type="protein sequence ID" value="ABF06331.1"/>
    <property type="molecule type" value="Genomic_DNA"/>
</dbReference>
<dbReference type="RefSeq" id="WP_000135199.1">
    <property type="nucleotide sequence ID" value="NC_008258.1"/>
</dbReference>
<dbReference type="SMR" id="Q0SX84"/>
<dbReference type="GeneID" id="98186237"/>
<dbReference type="KEGG" id="sfv:SFV_4357"/>
<dbReference type="HOGENOM" id="CLU_148710_2_3_6"/>
<dbReference type="Proteomes" id="UP000000659">
    <property type="component" value="Chromosome"/>
</dbReference>
<dbReference type="GO" id="GO:0022627">
    <property type="term" value="C:cytosolic small ribosomal subunit"/>
    <property type="evidence" value="ECO:0007669"/>
    <property type="project" value="TreeGrafter"/>
</dbReference>
<dbReference type="GO" id="GO:0070181">
    <property type="term" value="F:small ribosomal subunit rRNA binding"/>
    <property type="evidence" value="ECO:0007669"/>
    <property type="project" value="TreeGrafter"/>
</dbReference>
<dbReference type="GO" id="GO:0003735">
    <property type="term" value="F:structural constituent of ribosome"/>
    <property type="evidence" value="ECO:0007669"/>
    <property type="project" value="InterPro"/>
</dbReference>
<dbReference type="GO" id="GO:0006412">
    <property type="term" value="P:translation"/>
    <property type="evidence" value="ECO:0007669"/>
    <property type="project" value="UniProtKB-UniRule"/>
</dbReference>
<dbReference type="FunFam" id="4.10.640.10:FF:000001">
    <property type="entry name" value="30S ribosomal protein S18"/>
    <property type="match status" value="1"/>
</dbReference>
<dbReference type="Gene3D" id="4.10.640.10">
    <property type="entry name" value="Ribosomal protein S18"/>
    <property type="match status" value="1"/>
</dbReference>
<dbReference type="HAMAP" id="MF_00270">
    <property type="entry name" value="Ribosomal_bS18"/>
    <property type="match status" value="1"/>
</dbReference>
<dbReference type="InterPro" id="IPR001648">
    <property type="entry name" value="Ribosomal_bS18"/>
</dbReference>
<dbReference type="InterPro" id="IPR018275">
    <property type="entry name" value="Ribosomal_bS18_CS"/>
</dbReference>
<dbReference type="InterPro" id="IPR036870">
    <property type="entry name" value="Ribosomal_bS18_sf"/>
</dbReference>
<dbReference type="NCBIfam" id="TIGR00165">
    <property type="entry name" value="S18"/>
    <property type="match status" value="1"/>
</dbReference>
<dbReference type="PANTHER" id="PTHR13479">
    <property type="entry name" value="30S RIBOSOMAL PROTEIN S18"/>
    <property type="match status" value="1"/>
</dbReference>
<dbReference type="PANTHER" id="PTHR13479:SF40">
    <property type="entry name" value="SMALL RIBOSOMAL SUBUNIT PROTEIN BS18M"/>
    <property type="match status" value="1"/>
</dbReference>
<dbReference type="Pfam" id="PF01084">
    <property type="entry name" value="Ribosomal_S18"/>
    <property type="match status" value="1"/>
</dbReference>
<dbReference type="PRINTS" id="PR00974">
    <property type="entry name" value="RIBOSOMALS18"/>
</dbReference>
<dbReference type="SUPFAM" id="SSF46911">
    <property type="entry name" value="Ribosomal protein S18"/>
    <property type="match status" value="1"/>
</dbReference>
<dbReference type="PROSITE" id="PS00057">
    <property type="entry name" value="RIBOSOMAL_S18"/>
    <property type="match status" value="1"/>
</dbReference>
<protein>
    <recommendedName>
        <fullName evidence="1">Small ribosomal subunit protein bS18</fullName>
    </recommendedName>
    <alternativeName>
        <fullName evidence="2">30S ribosomal protein S18</fullName>
    </alternativeName>
</protein>
<feature type="chain" id="PRO_1000003612" description="Small ribosomal subunit protein bS18">
    <location>
        <begin position="1"/>
        <end position="75"/>
    </location>
</feature>
<reference key="1">
    <citation type="journal article" date="2006" name="BMC Genomics">
        <title>Complete genome sequence of Shigella flexneri 5b and comparison with Shigella flexneri 2a.</title>
        <authorList>
            <person name="Nie H."/>
            <person name="Yang F."/>
            <person name="Zhang X."/>
            <person name="Yang J."/>
            <person name="Chen L."/>
            <person name="Wang J."/>
            <person name="Xiong Z."/>
            <person name="Peng J."/>
            <person name="Sun L."/>
            <person name="Dong J."/>
            <person name="Xue Y."/>
            <person name="Xu X."/>
            <person name="Chen S."/>
            <person name="Yao Z."/>
            <person name="Shen Y."/>
            <person name="Jin Q."/>
        </authorList>
    </citation>
    <scope>NUCLEOTIDE SEQUENCE [LARGE SCALE GENOMIC DNA]</scope>
    <source>
        <strain>8401</strain>
    </source>
</reference>
<comment type="function">
    <text evidence="1">Binds as a heterodimer with protein bS6 to the central domain of the 16S rRNA, where it helps stabilize the platform of the 30S subunit.</text>
</comment>
<comment type="subunit">
    <text evidence="1">Part of the 30S ribosomal subunit. Forms a tight heterodimer with protein bS6.</text>
</comment>
<comment type="similarity">
    <text evidence="1">Belongs to the bacterial ribosomal protein bS18 family.</text>
</comment>
<evidence type="ECO:0000255" key="1">
    <source>
        <dbReference type="HAMAP-Rule" id="MF_00270"/>
    </source>
</evidence>
<evidence type="ECO:0000305" key="2"/>
<sequence length="75" mass="8986">MARYFRRRKFCRFTAEGVQEIDYKDIATLKNYITESGKIVPSRITGTRAKYQRQLARAIKRARYLSLLPYTDRHQ</sequence>